<keyword id="KW-0378">Hydrolase</keyword>
<keyword id="KW-0460">Magnesium</keyword>
<keyword id="KW-0479">Metal-binding</keyword>
<evidence type="ECO:0000255" key="1">
    <source>
        <dbReference type="HAMAP-Rule" id="MF_01568"/>
    </source>
</evidence>
<sequence>MGFPKEGEKVQIHSYKHNGSIHRMWKETTILKGTQSLVIGANDRTVVTESDGRTWITREPAICYFHENYWFNVIGMLREEGVYYYCNLSSPFAYDSEALKYIDYDLDIKVYPDMTYTLLDEDEYEKHSQIMQYPPVIDTILKRNVAQLTQWIHQRKGPFAPDFVDMWYERYLMYRN</sequence>
<reference key="1">
    <citation type="submission" date="2008-10" db="EMBL/GenBank/DDBJ databases">
        <title>Genome sequence of Bacillus anthracis str. CDC 684.</title>
        <authorList>
            <person name="Dodson R.J."/>
            <person name="Munk A.C."/>
            <person name="Brettin T."/>
            <person name="Bruce D."/>
            <person name="Detter C."/>
            <person name="Tapia R."/>
            <person name="Han C."/>
            <person name="Sutton G."/>
            <person name="Sims D."/>
        </authorList>
    </citation>
    <scope>NUCLEOTIDE SEQUENCE [LARGE SCALE GENOMIC DNA]</scope>
    <source>
        <strain>CDC 684 / NRRL 3495</strain>
    </source>
</reference>
<gene>
    <name type="ordered locus">BAMEG_4078</name>
</gene>
<proteinExistence type="inferred from homology"/>
<dbReference type="EC" id="3.6.1.15" evidence="1"/>
<dbReference type="EC" id="3.6.1.6" evidence="1"/>
<dbReference type="EMBL" id="CP001215">
    <property type="protein sequence ID" value="ACP17247.1"/>
    <property type="molecule type" value="Genomic_DNA"/>
</dbReference>
<dbReference type="RefSeq" id="WP_000506633.1">
    <property type="nucleotide sequence ID" value="NC_012581.1"/>
</dbReference>
<dbReference type="SMR" id="C3LHA4"/>
<dbReference type="KEGG" id="bah:BAMEG_4078"/>
<dbReference type="HOGENOM" id="CLU_109787_1_0_9"/>
<dbReference type="GO" id="GO:0000287">
    <property type="term" value="F:magnesium ion binding"/>
    <property type="evidence" value="ECO:0007669"/>
    <property type="project" value="UniProtKB-UniRule"/>
</dbReference>
<dbReference type="GO" id="GO:0017110">
    <property type="term" value="F:nucleoside diphosphate phosphatase activity"/>
    <property type="evidence" value="ECO:0007669"/>
    <property type="project" value="UniProtKB-UniRule"/>
</dbReference>
<dbReference type="GO" id="GO:0017111">
    <property type="term" value="F:ribonucleoside triphosphate phosphatase activity"/>
    <property type="evidence" value="ECO:0007669"/>
    <property type="project" value="UniProtKB-UniRule"/>
</dbReference>
<dbReference type="Gene3D" id="2.40.380.10">
    <property type="entry name" value="FomD-like"/>
    <property type="match status" value="1"/>
</dbReference>
<dbReference type="HAMAP" id="MF_01568">
    <property type="entry name" value="Ntdp"/>
    <property type="match status" value="1"/>
</dbReference>
<dbReference type="InterPro" id="IPR007295">
    <property type="entry name" value="DUF402"/>
</dbReference>
<dbReference type="InterPro" id="IPR035930">
    <property type="entry name" value="FomD-like_sf"/>
</dbReference>
<dbReference type="InterPro" id="IPR050212">
    <property type="entry name" value="Ntdp-like"/>
</dbReference>
<dbReference type="InterPro" id="IPR016882">
    <property type="entry name" value="SA1684"/>
</dbReference>
<dbReference type="NCBIfam" id="NF010183">
    <property type="entry name" value="PRK13662.1"/>
    <property type="match status" value="1"/>
</dbReference>
<dbReference type="PANTHER" id="PTHR39159">
    <property type="match status" value="1"/>
</dbReference>
<dbReference type="PANTHER" id="PTHR39159:SF1">
    <property type="entry name" value="UPF0374 PROTEIN YGAC"/>
    <property type="match status" value="1"/>
</dbReference>
<dbReference type="Pfam" id="PF04167">
    <property type="entry name" value="DUF402"/>
    <property type="match status" value="1"/>
</dbReference>
<dbReference type="PIRSF" id="PIRSF028345">
    <property type="entry name" value="UCP028345"/>
    <property type="match status" value="1"/>
</dbReference>
<dbReference type="SUPFAM" id="SSF159234">
    <property type="entry name" value="FomD-like"/>
    <property type="match status" value="1"/>
</dbReference>
<feature type="chain" id="PRO_1000185469" description="Nucleoside triphosphate/diphosphate phosphatase">
    <location>
        <begin position="1"/>
        <end position="176"/>
    </location>
</feature>
<feature type="active site" description="Proton donor" evidence="1">
    <location>
        <position position="23"/>
    </location>
</feature>
<feature type="binding site" evidence="1">
    <location>
        <position position="87"/>
    </location>
    <ligand>
        <name>Mg(2+)</name>
        <dbReference type="ChEBI" id="CHEBI:18420"/>
        <label>1</label>
    </ligand>
</feature>
<feature type="binding site" evidence="1">
    <location>
        <position position="103"/>
    </location>
    <ligand>
        <name>Mg(2+)</name>
        <dbReference type="ChEBI" id="CHEBI:18420"/>
        <label>1</label>
    </ligand>
</feature>
<feature type="binding site" evidence="1">
    <location>
        <position position="105"/>
    </location>
    <ligand>
        <name>Mg(2+)</name>
        <dbReference type="ChEBI" id="CHEBI:18420"/>
        <label>2</label>
    </ligand>
</feature>
<feature type="binding site" evidence="1">
    <location>
        <position position="107"/>
    </location>
    <ligand>
        <name>Mg(2+)</name>
        <dbReference type="ChEBI" id="CHEBI:18420"/>
        <label>1</label>
    </ligand>
</feature>
<feature type="binding site" evidence="1">
    <location>
        <position position="107"/>
    </location>
    <ligand>
        <name>Mg(2+)</name>
        <dbReference type="ChEBI" id="CHEBI:18420"/>
        <label>2</label>
    </ligand>
</feature>
<feature type="binding site" evidence="1">
    <location>
        <position position="120"/>
    </location>
    <ligand>
        <name>Mg(2+)</name>
        <dbReference type="ChEBI" id="CHEBI:18420"/>
        <label>2</label>
    </ligand>
</feature>
<feature type="binding site" evidence="1">
    <location>
        <position position="123"/>
    </location>
    <ligand>
        <name>Mg(2+)</name>
        <dbReference type="ChEBI" id="CHEBI:18420"/>
        <label>2</label>
    </ligand>
</feature>
<comment type="function">
    <text evidence="1">Has nucleoside phosphatase activity towards nucleoside triphosphates and nucleoside diphosphates.</text>
</comment>
<comment type="catalytic activity">
    <reaction evidence="1">
        <text>a ribonucleoside 5'-triphosphate + H2O = a ribonucleoside 5'-diphosphate + phosphate + H(+)</text>
        <dbReference type="Rhea" id="RHEA:23680"/>
        <dbReference type="ChEBI" id="CHEBI:15377"/>
        <dbReference type="ChEBI" id="CHEBI:15378"/>
        <dbReference type="ChEBI" id="CHEBI:43474"/>
        <dbReference type="ChEBI" id="CHEBI:57930"/>
        <dbReference type="ChEBI" id="CHEBI:61557"/>
        <dbReference type="EC" id="3.6.1.15"/>
    </reaction>
</comment>
<comment type="catalytic activity">
    <reaction evidence="1">
        <text>a ribonucleoside 5'-diphosphate + H2O = a ribonucleoside 5'-phosphate + phosphate + H(+)</text>
        <dbReference type="Rhea" id="RHEA:36799"/>
        <dbReference type="ChEBI" id="CHEBI:15377"/>
        <dbReference type="ChEBI" id="CHEBI:15378"/>
        <dbReference type="ChEBI" id="CHEBI:43474"/>
        <dbReference type="ChEBI" id="CHEBI:57930"/>
        <dbReference type="ChEBI" id="CHEBI:58043"/>
        <dbReference type="EC" id="3.6.1.6"/>
    </reaction>
</comment>
<comment type="cofactor">
    <cofactor evidence="1">
        <name>Mg(2+)</name>
        <dbReference type="ChEBI" id="CHEBI:18420"/>
    </cofactor>
</comment>
<comment type="similarity">
    <text evidence="1">Belongs to the Ntdp family.</text>
</comment>
<name>NTDP_BACAC</name>
<accession>C3LHA4</accession>
<protein>
    <recommendedName>
        <fullName evidence="1">Nucleoside triphosphate/diphosphate phosphatase</fullName>
        <ecNumber evidence="1">3.6.1.15</ecNumber>
        <ecNumber evidence="1">3.6.1.6</ecNumber>
    </recommendedName>
</protein>
<organism>
    <name type="scientific">Bacillus anthracis (strain CDC 684 / NRRL 3495)</name>
    <dbReference type="NCBI Taxonomy" id="568206"/>
    <lineage>
        <taxon>Bacteria</taxon>
        <taxon>Bacillati</taxon>
        <taxon>Bacillota</taxon>
        <taxon>Bacilli</taxon>
        <taxon>Bacillales</taxon>
        <taxon>Bacillaceae</taxon>
        <taxon>Bacillus</taxon>
        <taxon>Bacillus cereus group</taxon>
    </lineage>
</organism>